<proteinExistence type="inferred from homology"/>
<name>APG12_DROME</name>
<keyword id="KW-0072">Autophagy</keyword>
<keyword id="KW-0963">Cytoplasm</keyword>
<keyword id="KW-1017">Isopeptide bond</keyword>
<keyword id="KW-1185">Reference proteome</keyword>
<keyword id="KW-0833">Ubl conjugation pathway</keyword>
<reference key="1">
    <citation type="journal article" date="2000" name="Science">
        <title>The genome sequence of Drosophila melanogaster.</title>
        <authorList>
            <person name="Adams M.D."/>
            <person name="Celniker S.E."/>
            <person name="Holt R.A."/>
            <person name="Evans C.A."/>
            <person name="Gocayne J.D."/>
            <person name="Amanatides P.G."/>
            <person name="Scherer S.E."/>
            <person name="Li P.W."/>
            <person name="Hoskins R.A."/>
            <person name="Galle R.F."/>
            <person name="George R.A."/>
            <person name="Lewis S.E."/>
            <person name="Richards S."/>
            <person name="Ashburner M."/>
            <person name="Henderson S.N."/>
            <person name="Sutton G.G."/>
            <person name="Wortman J.R."/>
            <person name="Yandell M.D."/>
            <person name="Zhang Q."/>
            <person name="Chen L.X."/>
            <person name="Brandon R.C."/>
            <person name="Rogers Y.-H.C."/>
            <person name="Blazej R.G."/>
            <person name="Champe M."/>
            <person name="Pfeiffer B.D."/>
            <person name="Wan K.H."/>
            <person name="Doyle C."/>
            <person name="Baxter E.G."/>
            <person name="Helt G."/>
            <person name="Nelson C.R."/>
            <person name="Miklos G.L.G."/>
            <person name="Abril J.F."/>
            <person name="Agbayani A."/>
            <person name="An H.-J."/>
            <person name="Andrews-Pfannkoch C."/>
            <person name="Baldwin D."/>
            <person name="Ballew R.M."/>
            <person name="Basu A."/>
            <person name="Baxendale J."/>
            <person name="Bayraktaroglu L."/>
            <person name="Beasley E.M."/>
            <person name="Beeson K.Y."/>
            <person name="Benos P.V."/>
            <person name="Berman B.P."/>
            <person name="Bhandari D."/>
            <person name="Bolshakov S."/>
            <person name="Borkova D."/>
            <person name="Botchan M.R."/>
            <person name="Bouck J."/>
            <person name="Brokstein P."/>
            <person name="Brottier P."/>
            <person name="Burtis K.C."/>
            <person name="Busam D.A."/>
            <person name="Butler H."/>
            <person name="Cadieu E."/>
            <person name="Center A."/>
            <person name="Chandra I."/>
            <person name="Cherry J.M."/>
            <person name="Cawley S."/>
            <person name="Dahlke C."/>
            <person name="Davenport L.B."/>
            <person name="Davies P."/>
            <person name="de Pablos B."/>
            <person name="Delcher A."/>
            <person name="Deng Z."/>
            <person name="Mays A.D."/>
            <person name="Dew I."/>
            <person name="Dietz S.M."/>
            <person name="Dodson K."/>
            <person name="Doup L.E."/>
            <person name="Downes M."/>
            <person name="Dugan-Rocha S."/>
            <person name="Dunkov B.C."/>
            <person name="Dunn P."/>
            <person name="Durbin K.J."/>
            <person name="Evangelista C.C."/>
            <person name="Ferraz C."/>
            <person name="Ferriera S."/>
            <person name="Fleischmann W."/>
            <person name="Fosler C."/>
            <person name="Gabrielian A.E."/>
            <person name="Garg N.S."/>
            <person name="Gelbart W.M."/>
            <person name="Glasser K."/>
            <person name="Glodek A."/>
            <person name="Gong F."/>
            <person name="Gorrell J.H."/>
            <person name="Gu Z."/>
            <person name="Guan P."/>
            <person name="Harris M."/>
            <person name="Harris N.L."/>
            <person name="Harvey D.A."/>
            <person name="Heiman T.J."/>
            <person name="Hernandez J.R."/>
            <person name="Houck J."/>
            <person name="Hostin D."/>
            <person name="Houston K.A."/>
            <person name="Howland T.J."/>
            <person name="Wei M.-H."/>
            <person name="Ibegwam C."/>
            <person name="Jalali M."/>
            <person name="Kalush F."/>
            <person name="Karpen G.H."/>
            <person name="Ke Z."/>
            <person name="Kennison J.A."/>
            <person name="Ketchum K.A."/>
            <person name="Kimmel B.E."/>
            <person name="Kodira C.D."/>
            <person name="Kraft C.L."/>
            <person name="Kravitz S."/>
            <person name="Kulp D."/>
            <person name="Lai Z."/>
            <person name="Lasko P."/>
            <person name="Lei Y."/>
            <person name="Levitsky A.A."/>
            <person name="Li J.H."/>
            <person name="Li Z."/>
            <person name="Liang Y."/>
            <person name="Lin X."/>
            <person name="Liu X."/>
            <person name="Mattei B."/>
            <person name="McIntosh T.C."/>
            <person name="McLeod M.P."/>
            <person name="McPherson D."/>
            <person name="Merkulov G."/>
            <person name="Milshina N.V."/>
            <person name="Mobarry C."/>
            <person name="Morris J."/>
            <person name="Moshrefi A."/>
            <person name="Mount S.M."/>
            <person name="Moy M."/>
            <person name="Murphy B."/>
            <person name="Murphy L."/>
            <person name="Muzny D.M."/>
            <person name="Nelson D.L."/>
            <person name="Nelson D.R."/>
            <person name="Nelson K.A."/>
            <person name="Nixon K."/>
            <person name="Nusskern D.R."/>
            <person name="Pacleb J.M."/>
            <person name="Palazzolo M."/>
            <person name="Pittman G.S."/>
            <person name="Pan S."/>
            <person name="Pollard J."/>
            <person name="Puri V."/>
            <person name="Reese M.G."/>
            <person name="Reinert K."/>
            <person name="Remington K."/>
            <person name="Saunders R.D.C."/>
            <person name="Scheeler F."/>
            <person name="Shen H."/>
            <person name="Shue B.C."/>
            <person name="Siden-Kiamos I."/>
            <person name="Simpson M."/>
            <person name="Skupski M.P."/>
            <person name="Smith T.J."/>
            <person name="Spier E."/>
            <person name="Spradling A.C."/>
            <person name="Stapleton M."/>
            <person name="Strong R."/>
            <person name="Sun E."/>
            <person name="Svirskas R."/>
            <person name="Tector C."/>
            <person name="Turner R."/>
            <person name="Venter E."/>
            <person name="Wang A.H."/>
            <person name="Wang X."/>
            <person name="Wang Z.-Y."/>
            <person name="Wassarman D.A."/>
            <person name="Weinstock G.M."/>
            <person name="Weissenbach J."/>
            <person name="Williams S.M."/>
            <person name="Woodage T."/>
            <person name="Worley K.C."/>
            <person name="Wu D."/>
            <person name="Yang S."/>
            <person name="Yao Q.A."/>
            <person name="Ye J."/>
            <person name="Yeh R.-F."/>
            <person name="Zaveri J.S."/>
            <person name="Zhan M."/>
            <person name="Zhang G."/>
            <person name="Zhao Q."/>
            <person name="Zheng L."/>
            <person name="Zheng X.H."/>
            <person name="Zhong F.N."/>
            <person name="Zhong W."/>
            <person name="Zhou X."/>
            <person name="Zhu S.C."/>
            <person name="Zhu X."/>
            <person name="Smith H.O."/>
            <person name="Gibbs R.A."/>
            <person name="Myers E.W."/>
            <person name="Rubin G.M."/>
            <person name="Venter J.C."/>
        </authorList>
    </citation>
    <scope>NUCLEOTIDE SEQUENCE [LARGE SCALE GENOMIC DNA]</scope>
    <source>
        <strain>Berkeley</strain>
    </source>
</reference>
<reference key="2">
    <citation type="journal article" date="2002" name="Genome Biol.">
        <title>Annotation of the Drosophila melanogaster euchromatic genome: a systematic review.</title>
        <authorList>
            <person name="Misra S."/>
            <person name="Crosby M.A."/>
            <person name="Mungall C.J."/>
            <person name="Matthews B.B."/>
            <person name="Campbell K.S."/>
            <person name="Hradecky P."/>
            <person name="Huang Y."/>
            <person name="Kaminker J.S."/>
            <person name="Millburn G.H."/>
            <person name="Prochnik S.E."/>
            <person name="Smith C.D."/>
            <person name="Tupy J.L."/>
            <person name="Whitfield E.J."/>
            <person name="Bayraktaroglu L."/>
            <person name="Berman B.P."/>
            <person name="Bettencourt B.R."/>
            <person name="Celniker S.E."/>
            <person name="de Grey A.D.N.J."/>
            <person name="Drysdale R.A."/>
            <person name="Harris N.L."/>
            <person name="Richter J."/>
            <person name="Russo S."/>
            <person name="Schroeder A.J."/>
            <person name="Shu S.Q."/>
            <person name="Stapleton M."/>
            <person name="Yamada C."/>
            <person name="Ashburner M."/>
            <person name="Gelbart W.M."/>
            <person name="Rubin G.M."/>
            <person name="Lewis S.E."/>
        </authorList>
    </citation>
    <scope>GENOME REANNOTATION</scope>
    <source>
        <strain>Berkeley</strain>
    </source>
</reference>
<reference key="3">
    <citation type="submission" date="2005-05" db="EMBL/GenBank/DDBJ databases">
        <authorList>
            <person name="Stapleton M."/>
            <person name="Carlson J.W."/>
            <person name="Chavez C."/>
            <person name="Frise E."/>
            <person name="George R.A."/>
            <person name="Pacleb J.M."/>
            <person name="Park S."/>
            <person name="Wan K.H."/>
            <person name="Yu C."/>
            <person name="Celniker S."/>
        </authorList>
    </citation>
    <scope>NUCLEOTIDE SEQUENCE [LARGE SCALE MRNA]</scope>
    <source>
        <strain>Berkeley</strain>
    </source>
</reference>
<reference key="4">
    <citation type="journal article" date="2004" name="Dev. Cell">
        <title>Role and regulation of starvation-induced autophagy in the Drosophila fat body.</title>
        <authorList>
            <person name="Scott R.C."/>
            <person name="Schuldiner O."/>
            <person name="Neufeld T.P."/>
        </authorList>
    </citation>
    <scope>FUNCTION</scope>
</reference>
<sequence length="111" mass="12348">MAETPESQAALSTSSSTPADKDGSKICILLNATGNVPIIKKRTWTVDPNKTVGWIQTFIHKFLKLDASEQIFLYVNQTFAPAPDQIIKNLYECHGTNGKLVLYYCKNQAWG</sequence>
<evidence type="ECO:0000250" key="1"/>
<evidence type="ECO:0000256" key="2">
    <source>
        <dbReference type="SAM" id="MobiDB-lite"/>
    </source>
</evidence>
<evidence type="ECO:0000269" key="3">
    <source>
    </source>
</evidence>
<organism>
    <name type="scientific">Drosophila melanogaster</name>
    <name type="common">Fruit fly</name>
    <dbReference type="NCBI Taxonomy" id="7227"/>
    <lineage>
        <taxon>Eukaryota</taxon>
        <taxon>Metazoa</taxon>
        <taxon>Ecdysozoa</taxon>
        <taxon>Arthropoda</taxon>
        <taxon>Hexapoda</taxon>
        <taxon>Insecta</taxon>
        <taxon>Pterygota</taxon>
        <taxon>Neoptera</taxon>
        <taxon>Endopterygota</taxon>
        <taxon>Diptera</taxon>
        <taxon>Brachycera</taxon>
        <taxon>Muscomorpha</taxon>
        <taxon>Ephydroidea</taxon>
        <taxon>Drosophilidae</taxon>
        <taxon>Drosophila</taxon>
        <taxon>Sophophora</taxon>
    </lineage>
</organism>
<comment type="function">
    <text evidence="3">Required for autophagy.</text>
</comment>
<comment type="subunit">
    <text evidence="1">Conjugated to autophagy protein 5-like.</text>
</comment>
<comment type="subcellular location">
    <subcellularLocation>
        <location evidence="1">Cytoplasm</location>
    </subcellularLocation>
</comment>
<comment type="PTM">
    <text evidence="1">Conjugation of the G-112 to the K-132 of Autophagy protein 5-like is a covalent modification that is essential for autophagy.</text>
</comment>
<protein>
    <recommendedName>
        <fullName>Autophagy protein 12-like</fullName>
        <shortName>APG12-like</shortName>
    </recommendedName>
</protein>
<accession>Q9VTU1</accession>
<accession>Q4V6A9</accession>
<dbReference type="EMBL" id="AE014296">
    <property type="protein sequence ID" value="AAF49955.4"/>
    <property type="molecule type" value="Genomic_DNA"/>
</dbReference>
<dbReference type="EMBL" id="BT022374">
    <property type="protein sequence ID" value="AAY54790.1"/>
    <property type="molecule type" value="mRNA"/>
</dbReference>
<dbReference type="EMBL" id="BT022397">
    <property type="protein sequence ID" value="AAY54813.1"/>
    <property type="molecule type" value="mRNA"/>
</dbReference>
<dbReference type="RefSeq" id="NP_648551.3">
    <property type="nucleotide sequence ID" value="NM_140294.4"/>
</dbReference>
<dbReference type="SMR" id="Q9VTU1"/>
<dbReference type="BioGRID" id="64738">
    <property type="interactions" value="10"/>
</dbReference>
<dbReference type="ComplexPortal" id="CPX-2743">
    <property type="entry name" value="ATG12-ATG5-ATG16 complex"/>
</dbReference>
<dbReference type="FunCoup" id="Q9VTU1">
    <property type="interactions" value="1016"/>
</dbReference>
<dbReference type="IntAct" id="Q9VTU1">
    <property type="interactions" value="1"/>
</dbReference>
<dbReference type="STRING" id="7227.FBpp0289288"/>
<dbReference type="GlyGen" id="Q9VTU1">
    <property type="glycosylation" value="1 site"/>
</dbReference>
<dbReference type="PaxDb" id="7227-FBpp0289288"/>
<dbReference type="DNASU" id="39383"/>
<dbReference type="EnsemblMetazoa" id="FBtr0300011">
    <property type="protein sequence ID" value="FBpp0289288"/>
    <property type="gene ID" value="FBgn0036255"/>
</dbReference>
<dbReference type="GeneID" id="39383"/>
<dbReference type="KEGG" id="dme:Dmel_CG10861"/>
<dbReference type="AGR" id="FB:FBgn0036255"/>
<dbReference type="CTD" id="9140"/>
<dbReference type="FlyBase" id="FBgn0036255">
    <property type="gene designation" value="Atg12"/>
</dbReference>
<dbReference type="VEuPathDB" id="VectorBase:FBgn0036255"/>
<dbReference type="eggNOG" id="KOG3439">
    <property type="taxonomic scope" value="Eukaryota"/>
</dbReference>
<dbReference type="GeneTree" id="ENSGT00390000016654"/>
<dbReference type="HOGENOM" id="CLU_106795_3_1_1"/>
<dbReference type="InParanoid" id="Q9VTU1"/>
<dbReference type="OMA" id="YAKTHAW"/>
<dbReference type="OrthoDB" id="10003551at2759"/>
<dbReference type="PhylomeDB" id="Q9VTU1"/>
<dbReference type="Reactome" id="R-DME-1632852">
    <property type="pathway name" value="Macroautophagy"/>
</dbReference>
<dbReference type="BioGRID-ORCS" id="39383">
    <property type="hits" value="0 hits in 1 CRISPR screen"/>
</dbReference>
<dbReference type="GenomeRNAi" id="39383"/>
<dbReference type="PRO" id="PR:Q9VTU1"/>
<dbReference type="Proteomes" id="UP000000803">
    <property type="component" value="Chromosome 3L"/>
</dbReference>
<dbReference type="Bgee" id="FBgn0036255">
    <property type="expression patterns" value="Expressed in distal medullary amacrine neuron Dm11 in insect head and 109 other cell types or tissues"/>
</dbReference>
<dbReference type="GO" id="GO:0034274">
    <property type="term" value="C:Atg12-Atg5-Atg16 complex"/>
    <property type="evidence" value="ECO:0000250"/>
    <property type="project" value="FlyBase"/>
</dbReference>
<dbReference type="GO" id="GO:0000421">
    <property type="term" value="C:autophagosome membrane"/>
    <property type="evidence" value="ECO:0000318"/>
    <property type="project" value="GO_Central"/>
</dbReference>
<dbReference type="GO" id="GO:0034045">
    <property type="term" value="C:phagophore assembly site membrane"/>
    <property type="evidence" value="ECO:0000318"/>
    <property type="project" value="GO_Central"/>
</dbReference>
<dbReference type="GO" id="GO:0031386">
    <property type="term" value="F:protein tag activity"/>
    <property type="evidence" value="ECO:0000250"/>
    <property type="project" value="FlyBase"/>
</dbReference>
<dbReference type="GO" id="GO:0000045">
    <property type="term" value="P:autophagosome assembly"/>
    <property type="evidence" value="ECO:0000250"/>
    <property type="project" value="FlyBase"/>
</dbReference>
<dbReference type="GO" id="GO:0097352">
    <property type="term" value="P:autophagosome maturation"/>
    <property type="evidence" value="ECO:0000318"/>
    <property type="project" value="GO_Central"/>
</dbReference>
<dbReference type="GO" id="GO:0006914">
    <property type="term" value="P:autophagy"/>
    <property type="evidence" value="ECO:0000315"/>
    <property type="project" value="FlyBase"/>
</dbReference>
<dbReference type="GO" id="GO:0000422">
    <property type="term" value="P:autophagy of mitochondrion"/>
    <property type="evidence" value="ECO:0000318"/>
    <property type="project" value="GO_Central"/>
</dbReference>
<dbReference type="GO" id="GO:0009267">
    <property type="term" value="P:cellular response to starvation"/>
    <property type="evidence" value="ECO:0000315"/>
    <property type="project" value="FlyBase"/>
</dbReference>
<dbReference type="GO" id="GO:0061723">
    <property type="term" value="P:glycophagy"/>
    <property type="evidence" value="ECO:0000315"/>
    <property type="project" value="FlyBase"/>
</dbReference>
<dbReference type="GO" id="GO:0035096">
    <property type="term" value="P:larval midgut cell programmed cell death"/>
    <property type="evidence" value="ECO:0000315"/>
    <property type="project" value="FlyBase"/>
</dbReference>
<dbReference type="GO" id="GO:0016236">
    <property type="term" value="P:macroautophagy"/>
    <property type="evidence" value="ECO:0000315"/>
    <property type="project" value="FlyBase"/>
</dbReference>
<dbReference type="GO" id="GO:0034727">
    <property type="term" value="P:piecemeal microautophagy of the nucleus"/>
    <property type="evidence" value="ECO:0000318"/>
    <property type="project" value="GO_Central"/>
</dbReference>
<dbReference type="CDD" id="cd01612">
    <property type="entry name" value="Ubl_ATG12"/>
    <property type="match status" value="1"/>
</dbReference>
<dbReference type="FunFam" id="3.10.20.90:FF:000150">
    <property type="entry name" value="Ubiquitin-like protein ATG12"/>
    <property type="match status" value="1"/>
</dbReference>
<dbReference type="Gene3D" id="3.10.20.90">
    <property type="entry name" value="Phosphatidylinositol 3-kinase Catalytic Subunit, Chain A, domain 1"/>
    <property type="match status" value="1"/>
</dbReference>
<dbReference type="InterPro" id="IPR007242">
    <property type="entry name" value="Atg12"/>
</dbReference>
<dbReference type="InterPro" id="IPR029071">
    <property type="entry name" value="Ubiquitin-like_domsf"/>
</dbReference>
<dbReference type="PANTHER" id="PTHR13385">
    <property type="entry name" value="AUTOPHAGY PROTEIN 12"/>
    <property type="match status" value="1"/>
</dbReference>
<dbReference type="PANTHER" id="PTHR13385:SF0">
    <property type="entry name" value="UBIQUITIN-LIKE PROTEIN ATG12"/>
    <property type="match status" value="1"/>
</dbReference>
<dbReference type="Pfam" id="PF04110">
    <property type="entry name" value="APG12"/>
    <property type="match status" value="1"/>
</dbReference>
<dbReference type="SUPFAM" id="SSF54236">
    <property type="entry name" value="Ubiquitin-like"/>
    <property type="match status" value="1"/>
</dbReference>
<gene>
    <name type="primary">Atg12</name>
    <name type="ORF">CG10861</name>
</gene>
<feature type="chain" id="PRO_0000064632" description="Autophagy protein 12-like">
    <location>
        <begin position="1"/>
        <end position="111"/>
    </location>
</feature>
<feature type="region of interest" description="Disordered" evidence="2">
    <location>
        <begin position="1"/>
        <end position="22"/>
    </location>
</feature>
<feature type="compositionally biased region" description="Polar residues" evidence="2">
    <location>
        <begin position="1"/>
        <end position="18"/>
    </location>
</feature>
<feature type="cross-link" description="Glycyl lysine isopeptide (Gly-Lys) (interchain with K-132 in APG5)" evidence="1">
    <location>
        <position position="111"/>
    </location>
</feature>